<accession>A7WZ06</accession>
<gene>
    <name evidence="1" type="primary">nagB</name>
    <name type="ordered locus">SAHV_0567</name>
</gene>
<reference key="1">
    <citation type="journal article" date="2008" name="Antimicrob. Agents Chemother.">
        <title>Mutated response regulator graR is responsible for phenotypic conversion of Staphylococcus aureus from heterogeneous vancomycin-intermediate resistance to vancomycin-intermediate resistance.</title>
        <authorList>
            <person name="Neoh H.-M."/>
            <person name="Cui L."/>
            <person name="Yuzawa H."/>
            <person name="Takeuchi F."/>
            <person name="Matsuo M."/>
            <person name="Hiramatsu K."/>
        </authorList>
    </citation>
    <scope>NUCLEOTIDE SEQUENCE [LARGE SCALE GENOMIC DNA]</scope>
    <source>
        <strain>Mu3 / ATCC 700698</strain>
    </source>
</reference>
<name>NAGB_STAA1</name>
<proteinExistence type="inferred from homology"/>
<dbReference type="EC" id="3.5.99.6" evidence="1"/>
<dbReference type="EMBL" id="AP009324">
    <property type="protein sequence ID" value="BAF77450.1"/>
    <property type="molecule type" value="Genomic_DNA"/>
</dbReference>
<dbReference type="RefSeq" id="WP_000866415.1">
    <property type="nucleotide sequence ID" value="NZ_CTYB01000020.1"/>
</dbReference>
<dbReference type="SMR" id="A7WZ06"/>
<dbReference type="KEGG" id="saw:SAHV_0567"/>
<dbReference type="HOGENOM" id="CLU_049611_1_1_9"/>
<dbReference type="UniPathway" id="UPA00629">
    <property type="reaction ID" value="UER00684"/>
</dbReference>
<dbReference type="GO" id="GO:0005737">
    <property type="term" value="C:cytoplasm"/>
    <property type="evidence" value="ECO:0007669"/>
    <property type="project" value="TreeGrafter"/>
</dbReference>
<dbReference type="GO" id="GO:0004342">
    <property type="term" value="F:glucosamine-6-phosphate deaminase activity"/>
    <property type="evidence" value="ECO:0007669"/>
    <property type="project" value="UniProtKB-UniRule"/>
</dbReference>
<dbReference type="GO" id="GO:0042802">
    <property type="term" value="F:identical protein binding"/>
    <property type="evidence" value="ECO:0007669"/>
    <property type="project" value="TreeGrafter"/>
</dbReference>
<dbReference type="GO" id="GO:0005975">
    <property type="term" value="P:carbohydrate metabolic process"/>
    <property type="evidence" value="ECO:0007669"/>
    <property type="project" value="InterPro"/>
</dbReference>
<dbReference type="GO" id="GO:0006043">
    <property type="term" value="P:glucosamine catabolic process"/>
    <property type="evidence" value="ECO:0007669"/>
    <property type="project" value="TreeGrafter"/>
</dbReference>
<dbReference type="GO" id="GO:0006046">
    <property type="term" value="P:N-acetylglucosamine catabolic process"/>
    <property type="evidence" value="ECO:0007669"/>
    <property type="project" value="TreeGrafter"/>
</dbReference>
<dbReference type="GO" id="GO:0019262">
    <property type="term" value="P:N-acetylneuraminate catabolic process"/>
    <property type="evidence" value="ECO:0007669"/>
    <property type="project" value="UniProtKB-UniRule"/>
</dbReference>
<dbReference type="CDD" id="cd01399">
    <property type="entry name" value="GlcN6P_deaminase"/>
    <property type="match status" value="1"/>
</dbReference>
<dbReference type="FunFam" id="3.40.50.1360:FF:000003">
    <property type="entry name" value="Glucosamine-6-phosphate deaminase"/>
    <property type="match status" value="1"/>
</dbReference>
<dbReference type="Gene3D" id="3.40.50.1360">
    <property type="match status" value="1"/>
</dbReference>
<dbReference type="HAMAP" id="MF_01241">
    <property type="entry name" value="GlcN6P_deamin"/>
    <property type="match status" value="1"/>
</dbReference>
<dbReference type="InterPro" id="IPR006148">
    <property type="entry name" value="Glc/Gal-6P_isomerase"/>
</dbReference>
<dbReference type="InterPro" id="IPR004547">
    <property type="entry name" value="Glucosamine6P_isomerase"/>
</dbReference>
<dbReference type="InterPro" id="IPR018321">
    <property type="entry name" value="Glucosamine6P_isomerase_CS"/>
</dbReference>
<dbReference type="InterPro" id="IPR037171">
    <property type="entry name" value="NagB/RpiA_transferase-like"/>
</dbReference>
<dbReference type="NCBIfam" id="TIGR00502">
    <property type="entry name" value="nagB"/>
    <property type="match status" value="1"/>
</dbReference>
<dbReference type="PANTHER" id="PTHR11280">
    <property type="entry name" value="GLUCOSAMINE-6-PHOSPHATE ISOMERASE"/>
    <property type="match status" value="1"/>
</dbReference>
<dbReference type="PANTHER" id="PTHR11280:SF5">
    <property type="entry name" value="GLUCOSAMINE-6-PHOSPHATE ISOMERASE"/>
    <property type="match status" value="1"/>
</dbReference>
<dbReference type="Pfam" id="PF01182">
    <property type="entry name" value="Glucosamine_iso"/>
    <property type="match status" value="1"/>
</dbReference>
<dbReference type="SUPFAM" id="SSF100950">
    <property type="entry name" value="NagB/RpiA/CoA transferase-like"/>
    <property type="match status" value="1"/>
</dbReference>
<dbReference type="PROSITE" id="PS01161">
    <property type="entry name" value="GLC_GALNAC_ISOMERASE"/>
    <property type="match status" value="1"/>
</dbReference>
<sequence>MKVLNLGSKKQASFYVACELYKEMAFNQHCKLGLATGGTMTDLYEQLVKLLNKNQLNVDNVSTFNLDEYVGLTASHPQSYHYYMDDMLFKQYPYFNRKNIHIPNGDADDMNAEASKYNDVLEQQGQRDIQILGIGENGHIGFNEPGTPFDSVTHIVDLTESTIKANSRYFKNEDDVPKQAISMGLANILQAKRIILLAFGEKKRAAITHLLNQEISVDVPATLLHKHPNVEIYLDDEACPKNVAKIHVDEMD</sequence>
<comment type="function">
    <text evidence="1">Catalyzes the reversible isomerization-deamination of glucosamine 6-phosphate (GlcN6P) to form fructose 6-phosphate (Fru6P) and ammonium ion.</text>
</comment>
<comment type="catalytic activity">
    <reaction evidence="1">
        <text>alpha-D-glucosamine 6-phosphate + H2O = beta-D-fructose 6-phosphate + NH4(+)</text>
        <dbReference type="Rhea" id="RHEA:12172"/>
        <dbReference type="ChEBI" id="CHEBI:15377"/>
        <dbReference type="ChEBI" id="CHEBI:28938"/>
        <dbReference type="ChEBI" id="CHEBI:57634"/>
        <dbReference type="ChEBI" id="CHEBI:75989"/>
        <dbReference type="EC" id="3.5.99.6"/>
    </reaction>
</comment>
<comment type="pathway">
    <text evidence="1">Amino-sugar metabolism; N-acetylneuraminate degradation; D-fructose 6-phosphate from N-acetylneuraminate: step 5/5.</text>
</comment>
<comment type="similarity">
    <text evidence="1">Belongs to the glucosamine/galactosamine-6-phosphate isomerase family. NagB subfamily.</text>
</comment>
<feature type="chain" id="PRO_1000067022" description="Glucosamine-6-phosphate deaminase">
    <location>
        <begin position="1"/>
        <end position="252"/>
    </location>
</feature>
<feature type="active site" description="Proton acceptor; for enolization step" evidence="1">
    <location>
        <position position="67"/>
    </location>
</feature>
<feature type="active site" description="For ring-opening step" evidence="1">
    <location>
        <position position="137"/>
    </location>
</feature>
<feature type="active site" description="Proton acceptor; for ring-opening step" evidence="1">
    <location>
        <position position="139"/>
    </location>
</feature>
<feature type="active site" description="For ring-opening step" evidence="1">
    <location>
        <position position="144"/>
    </location>
</feature>
<organism>
    <name type="scientific">Staphylococcus aureus (strain Mu3 / ATCC 700698)</name>
    <dbReference type="NCBI Taxonomy" id="418127"/>
    <lineage>
        <taxon>Bacteria</taxon>
        <taxon>Bacillati</taxon>
        <taxon>Bacillota</taxon>
        <taxon>Bacilli</taxon>
        <taxon>Bacillales</taxon>
        <taxon>Staphylococcaceae</taxon>
        <taxon>Staphylococcus</taxon>
    </lineage>
</organism>
<evidence type="ECO:0000255" key="1">
    <source>
        <dbReference type="HAMAP-Rule" id="MF_01241"/>
    </source>
</evidence>
<keyword id="KW-0119">Carbohydrate metabolism</keyword>
<keyword id="KW-0378">Hydrolase</keyword>
<protein>
    <recommendedName>
        <fullName evidence="1">Glucosamine-6-phosphate deaminase</fullName>
        <ecNumber evidence="1">3.5.99.6</ecNumber>
    </recommendedName>
    <alternativeName>
        <fullName evidence="1">GlcN6P deaminase</fullName>
        <shortName evidence="1">GNPDA</shortName>
    </alternativeName>
    <alternativeName>
        <fullName evidence="1">Glucosamine-6-phosphate isomerase</fullName>
    </alternativeName>
</protein>